<evidence type="ECO:0000250" key="1">
    <source>
        <dbReference type="UniProtKB" id="P02699"/>
    </source>
</evidence>
<evidence type="ECO:0000250" key="2">
    <source>
        <dbReference type="UniProtKB" id="P08100"/>
    </source>
</evidence>
<evidence type="ECO:0000250" key="3">
    <source>
        <dbReference type="UniProtKB" id="P32309"/>
    </source>
</evidence>
<evidence type="ECO:0000250" key="4">
    <source>
        <dbReference type="UniProtKB" id="P35359"/>
    </source>
</evidence>
<evidence type="ECO:0000255" key="5"/>
<evidence type="ECO:0000255" key="6">
    <source>
        <dbReference type="PROSITE-ProRule" id="PRU00521"/>
    </source>
</evidence>
<evidence type="ECO:0000256" key="7">
    <source>
        <dbReference type="SAM" id="MobiDB-lite"/>
    </source>
</evidence>
<organism>
    <name type="scientific">Leucoraja erinaceus</name>
    <name type="common">Little skate</name>
    <name type="synonym">Raja erinacea</name>
    <dbReference type="NCBI Taxonomy" id="7782"/>
    <lineage>
        <taxon>Eukaryota</taxon>
        <taxon>Metazoa</taxon>
        <taxon>Chordata</taxon>
        <taxon>Craniata</taxon>
        <taxon>Vertebrata</taxon>
        <taxon>Chondrichthyes</taxon>
        <taxon>Elasmobranchii</taxon>
        <taxon>Batoidea</taxon>
        <taxon>Rajiformes</taxon>
        <taxon>Rajidae</taxon>
        <taxon>Leucoraja</taxon>
    </lineage>
</organism>
<dbReference type="EMBL" id="U81514">
    <property type="protein sequence ID" value="AAC60251.1"/>
    <property type="molecule type" value="mRNA"/>
</dbReference>
<dbReference type="SMR" id="P79863"/>
<dbReference type="GlyCosmos" id="P79863">
    <property type="glycosylation" value="2 sites, No reported glycans"/>
</dbReference>
<dbReference type="GO" id="GO:0016020">
    <property type="term" value="C:membrane"/>
    <property type="evidence" value="ECO:0000250"/>
    <property type="project" value="UniProtKB"/>
</dbReference>
<dbReference type="GO" id="GO:0097381">
    <property type="term" value="C:photoreceptor disc membrane"/>
    <property type="evidence" value="ECO:0000250"/>
    <property type="project" value="UniProtKB"/>
</dbReference>
<dbReference type="GO" id="GO:0005886">
    <property type="term" value="C:plasma membrane"/>
    <property type="evidence" value="ECO:0000250"/>
    <property type="project" value="UniProtKB"/>
</dbReference>
<dbReference type="GO" id="GO:0005502">
    <property type="term" value="F:11-cis retinal binding"/>
    <property type="evidence" value="ECO:0000250"/>
    <property type="project" value="UniProtKB"/>
</dbReference>
<dbReference type="GO" id="GO:0008020">
    <property type="term" value="F:G protein-coupled photoreceptor activity"/>
    <property type="evidence" value="ECO:0000250"/>
    <property type="project" value="UniProtKB"/>
</dbReference>
<dbReference type="GO" id="GO:0016038">
    <property type="term" value="P:absorption of visible light"/>
    <property type="evidence" value="ECO:0000250"/>
    <property type="project" value="UniProtKB"/>
</dbReference>
<dbReference type="GO" id="GO:0016056">
    <property type="term" value="P:G protein-coupled opsin signaling pathway"/>
    <property type="evidence" value="ECO:0000250"/>
    <property type="project" value="UniProtKB"/>
</dbReference>
<dbReference type="GO" id="GO:0007601">
    <property type="term" value="P:visual perception"/>
    <property type="evidence" value="ECO:0007669"/>
    <property type="project" value="UniProtKB-KW"/>
</dbReference>
<dbReference type="CDD" id="cd15080">
    <property type="entry name" value="7tmA_MWS_opsin"/>
    <property type="match status" value="1"/>
</dbReference>
<dbReference type="FunFam" id="1.20.1070.10:FF:000018">
    <property type="entry name" value="Rhodopsin"/>
    <property type="match status" value="1"/>
</dbReference>
<dbReference type="Gene3D" id="1.20.1070.10">
    <property type="entry name" value="Rhodopsin 7-helix transmembrane proteins"/>
    <property type="match status" value="1"/>
</dbReference>
<dbReference type="InterPro" id="IPR050125">
    <property type="entry name" value="GPCR_opsins"/>
</dbReference>
<dbReference type="InterPro" id="IPR000276">
    <property type="entry name" value="GPCR_Rhodpsn"/>
</dbReference>
<dbReference type="InterPro" id="IPR017452">
    <property type="entry name" value="GPCR_Rhodpsn_7TM"/>
</dbReference>
<dbReference type="InterPro" id="IPR001760">
    <property type="entry name" value="Opsin"/>
</dbReference>
<dbReference type="InterPro" id="IPR027430">
    <property type="entry name" value="Retinal_BS"/>
</dbReference>
<dbReference type="InterPro" id="IPR000732">
    <property type="entry name" value="Rhodopsin"/>
</dbReference>
<dbReference type="InterPro" id="IPR019477">
    <property type="entry name" value="Rhodopsin_N"/>
</dbReference>
<dbReference type="PANTHER" id="PTHR24240">
    <property type="entry name" value="OPSIN"/>
    <property type="match status" value="1"/>
</dbReference>
<dbReference type="Pfam" id="PF00001">
    <property type="entry name" value="7tm_1"/>
    <property type="match status" value="1"/>
</dbReference>
<dbReference type="Pfam" id="PF10413">
    <property type="entry name" value="Rhodopsin_N"/>
    <property type="match status" value="1"/>
</dbReference>
<dbReference type="PRINTS" id="PR00237">
    <property type="entry name" value="GPCRRHODOPSN"/>
</dbReference>
<dbReference type="PRINTS" id="PR00238">
    <property type="entry name" value="OPSIN"/>
</dbReference>
<dbReference type="PRINTS" id="PR00579">
    <property type="entry name" value="RHODOPSIN"/>
</dbReference>
<dbReference type="SUPFAM" id="SSF81321">
    <property type="entry name" value="Family A G protein-coupled receptor-like"/>
    <property type="match status" value="1"/>
</dbReference>
<dbReference type="PROSITE" id="PS00237">
    <property type="entry name" value="G_PROTEIN_RECEP_F1_1"/>
    <property type="match status" value="1"/>
</dbReference>
<dbReference type="PROSITE" id="PS50262">
    <property type="entry name" value="G_PROTEIN_RECEP_F1_2"/>
    <property type="match status" value="1"/>
</dbReference>
<dbReference type="PROSITE" id="PS00238">
    <property type="entry name" value="OPSIN"/>
    <property type="match status" value="1"/>
</dbReference>
<keyword id="KW-0966">Cell projection</keyword>
<keyword id="KW-0157">Chromophore</keyword>
<keyword id="KW-1015">Disulfide bond</keyword>
<keyword id="KW-0297">G-protein coupled receptor</keyword>
<keyword id="KW-0325">Glycoprotein</keyword>
<keyword id="KW-0449">Lipoprotein</keyword>
<keyword id="KW-0472">Membrane</keyword>
<keyword id="KW-0564">Palmitate</keyword>
<keyword id="KW-0597">Phosphoprotein</keyword>
<keyword id="KW-0600">Photoreceptor protein</keyword>
<keyword id="KW-0675">Receptor</keyword>
<keyword id="KW-0681">Retinal protein</keyword>
<keyword id="KW-0716">Sensory transduction</keyword>
<keyword id="KW-0807">Transducer</keyword>
<keyword id="KW-0812">Transmembrane</keyword>
<keyword id="KW-1133">Transmembrane helix</keyword>
<keyword id="KW-0844">Vision</keyword>
<comment type="function">
    <text evidence="1 2 3">Photoreceptor required for image-forming vision at low light intensity. While most salt water fish species use retinal as chromophore, most freshwater fish use 3-dehydroretinal, or a mixture of retinal and 3-dehydroretinal (By similarity). Light-induced isomerization of 11-cis to all-trans retinal triggers a conformational change that activates signaling via G-proteins. Subsequent receptor phosphorylation mediates displacement of the bound G-protein alpha subunit by arrestin and terminates signaling (By similarity).</text>
</comment>
<comment type="subcellular location">
    <subcellularLocation>
        <location evidence="2">Membrane</location>
        <topology evidence="2">Multi-pass membrane protein</topology>
    </subcellularLocation>
    <subcellularLocation>
        <location evidence="4">Cell projection</location>
        <location evidence="4">Cilium</location>
        <location evidence="4">Photoreceptor outer segment</location>
    </subcellularLocation>
    <text evidence="2">Synthesized in the inner segment (IS) of rod photoreceptor cells before vectorial transport to disk membranes in the rod outer segment (OS) photosensory cilia.</text>
</comment>
<comment type="PTM">
    <text evidence="1">Phosphorylated on some or all of the serine and threonine residues present in the C-terminal region.</text>
</comment>
<comment type="PTM">
    <text evidence="1">Contains one covalently linked retinal chromophore.</text>
</comment>
<comment type="similarity">
    <text evidence="6">Belongs to the G-protein coupled receptor 1 family. Opsin subfamily.</text>
</comment>
<protein>
    <recommendedName>
        <fullName>Rhodopsin</fullName>
    </recommendedName>
</protein>
<feature type="chain" id="PRO_0000197703" description="Rhodopsin">
    <location>
        <begin position="1"/>
        <end position="354"/>
    </location>
</feature>
<feature type="topological domain" description="Extracellular" evidence="1">
    <location>
        <begin position="1"/>
        <end position="36"/>
    </location>
</feature>
<feature type="transmembrane region" description="Helical; Name=1" evidence="1">
    <location>
        <begin position="37"/>
        <end position="61"/>
    </location>
</feature>
<feature type="topological domain" description="Cytoplasmic" evidence="1">
    <location>
        <begin position="62"/>
        <end position="73"/>
    </location>
</feature>
<feature type="transmembrane region" description="Helical; Name=2" evidence="1">
    <location>
        <begin position="74"/>
        <end position="96"/>
    </location>
</feature>
<feature type="topological domain" description="Extracellular" evidence="1">
    <location>
        <begin position="97"/>
        <end position="110"/>
    </location>
</feature>
<feature type="transmembrane region" description="Helical; Name=3" evidence="1">
    <location>
        <begin position="111"/>
        <end position="133"/>
    </location>
</feature>
<feature type="topological domain" description="Cytoplasmic" evidence="1">
    <location>
        <begin position="134"/>
        <end position="152"/>
    </location>
</feature>
<feature type="transmembrane region" description="Helical; Name=4" evidence="1">
    <location>
        <begin position="153"/>
        <end position="173"/>
    </location>
</feature>
<feature type="topological domain" description="Extracellular" evidence="1">
    <location>
        <begin position="174"/>
        <end position="202"/>
    </location>
</feature>
<feature type="transmembrane region" description="Helical; Name=5" evidence="1">
    <location>
        <begin position="203"/>
        <end position="224"/>
    </location>
</feature>
<feature type="topological domain" description="Cytoplasmic" evidence="1">
    <location>
        <begin position="225"/>
        <end position="252"/>
    </location>
</feature>
<feature type="transmembrane region" description="Helical; Name=6" evidence="1">
    <location>
        <begin position="253"/>
        <end position="274"/>
    </location>
</feature>
<feature type="topological domain" description="Extracellular" evidence="1">
    <location>
        <begin position="275"/>
        <end position="286"/>
    </location>
</feature>
<feature type="transmembrane region" description="Helical; Name=7" evidence="1">
    <location>
        <begin position="287"/>
        <end position="308"/>
    </location>
</feature>
<feature type="topological domain" description="Cytoplasmic" evidence="1">
    <location>
        <begin position="309"/>
        <end position="354"/>
    </location>
</feature>
<feature type="region of interest" description="Disordered" evidence="7">
    <location>
        <begin position="333"/>
        <end position="354"/>
    </location>
</feature>
<feature type="short sequence motif" description="'Ionic lock' involved in activated form stabilization" evidence="1">
    <location>
        <begin position="134"/>
        <end position="136"/>
    </location>
</feature>
<feature type="compositionally biased region" description="Low complexity" evidence="7">
    <location>
        <begin position="334"/>
        <end position="354"/>
    </location>
</feature>
<feature type="site" description="Plays an important role in the conformation switch to the active conformation" evidence="1">
    <location>
        <position position="113"/>
    </location>
</feature>
<feature type="modified residue" description="N6-(retinylidene)lysine" evidence="1">
    <location>
        <position position="296"/>
    </location>
</feature>
<feature type="lipid moiety-binding region" description="S-palmitoyl cysteine" evidence="1">
    <location>
        <position position="322"/>
    </location>
</feature>
<feature type="glycosylation site" description="N-linked (GlcNAc...) asparagine" evidence="5">
    <location>
        <position position="2"/>
    </location>
</feature>
<feature type="glycosylation site" description="N-linked (GlcNAc...) asparagine" evidence="5">
    <location>
        <position position="15"/>
    </location>
</feature>
<feature type="disulfide bond" evidence="6">
    <location>
        <begin position="110"/>
        <end position="187"/>
    </location>
</feature>
<proteinExistence type="evidence at transcript level"/>
<name>OPSD_LEUER</name>
<accession>P79863</accession>
<gene>
    <name type="primary">rho</name>
</gene>
<sequence>MNGTEGENFYVPMSNKTGVVRSPFDYPQYYLGEPWMFSALAAYMFFLILTGLPVNFLTLFVTIQHKKLRQPLNYILLNLAVSDLFMVFGGFTTTIITSMNGYFIFGPAGCNFEGFFATLGGEVGLWCLVVLAIERYMVVCKPMANFRFGSQHAIIGVVFTWIMALSCAGPPLVGWSRYIPEGLQCSCGVDYYTMKPEVNNESFVIYMFVVHFTIPLIVIFFCYGRLVCTVKEAAAQQQESESTQRAEREVTRMVIIMVVAFLICWVPYASVAFYIFINQGCDFTPFFMTVPAFFAKSSAVYNPLIYILMNKQFRNCMITTICLGKNPFEEEESTSASASKTEASSVSSSQVAPA</sequence>
<reference key="1">
    <citation type="journal article" date="1997" name="Gene">
        <title>Molecular cloning of a rod opsin cDNA from the skate retina.</title>
        <authorList>
            <person name="O'Brien J."/>
            <person name="Ripps H."/>
            <person name="Al-Ubaidi M.R."/>
        </authorList>
    </citation>
    <scope>NUCLEOTIDE SEQUENCE [MRNA]</scope>
    <source>
        <tissue>Retina</tissue>
    </source>
</reference>